<sequence>MVEAGAKISKGGTQQAAGHGLEGYASDGSTDLRSAGAAEHETQDSAKAQENEASANSMDDGLELGRRGQGVSPVLTPPTEEEGDAPAQKNRRQRLKERKATAAAAGALPGIGRARSGSVKEGGSPKAAGAESPRRGAGAAAKDAKISERAEGAGSPQQRKQGTGAAAPGSPPRRRLEAAEPPATPPRRKQAEGEQSRPEGEQGRPENKNKKAKDKHDDLPTRGPGTRRPQVRAVPPPLSEELKNEAFRKTLERVETVAPEVPLQAAEQRSEPSDFDLIINRLRVNAQEYMSQDEQAQENLQEGVRQLKSSYTEFLQTIQPEEKKKGDVEELDEEEEEMRKIDWQFWTSVVNNFATVAKNDSAKLEEKVSDGIPKQIRGIIWQLISNSKSKEIRQLYQDLLQIPSEHEKAIQRDISRTKFIPVDKTESLFNVLKAYSLFDPEVGYTQGMAFVTAPLLINVWEEADAFGLLIKLMKNYGLREFFLPDMPGLQLKLYEFDRLLEENSPQLYNHLIRLGIRSSMYATQWFLTLFAYKFPLGFVLRILDVIFVEGIESLLKFAVILMLKNESVLVQLKFDKLLDFLKDGLFNYYLKENVRKRQEGKEDTNAIQNAEVSDSSSKSSTVGSEILGVEYNINVFIQDAIREVKITPIQLRRYSSEYEEIHQLEFQREAQYEEMRIKNRQLQREVRKLEHDYTLLNREHIMLANELIQNRLKIETLNDENKDLKLTVDVLKRHLSDEMRKQTLPNPDAQIPTDLKEDLEKTMQRNLEVMNQNQELEDKVTALERQVKQLKKNRANTSVEHGEDSSSEPRVRSHIVTPSISSWTFKKPW</sequence>
<reference key="1">
    <citation type="journal article" date="2004" name="Science">
        <title>The Ashbya gossypii genome as a tool for mapping the ancient Saccharomyces cerevisiae genome.</title>
        <authorList>
            <person name="Dietrich F.S."/>
            <person name="Voegeli S."/>
            <person name="Brachat S."/>
            <person name="Lerch A."/>
            <person name="Gates K."/>
            <person name="Steiner S."/>
            <person name="Mohr C."/>
            <person name="Poehlmann R."/>
            <person name="Luedi P."/>
            <person name="Choi S."/>
            <person name="Wing R.A."/>
            <person name="Flavier A."/>
            <person name="Gaffney T.D."/>
            <person name="Philippsen P."/>
        </authorList>
    </citation>
    <scope>NUCLEOTIDE SEQUENCE [LARGE SCALE GENOMIC DNA]</scope>
    <source>
        <strain>ATCC 10895 / CBS 109.51 / FGSC 9923 / NRRL Y-1056</strain>
    </source>
</reference>
<reference key="2">
    <citation type="journal article" date="2013" name="G3 (Bethesda)">
        <title>Genomes of Ashbya fungi isolated from insects reveal four mating-type loci, numerous translocations, lack of transposons, and distinct gene duplications.</title>
        <authorList>
            <person name="Dietrich F.S."/>
            <person name="Voegeli S."/>
            <person name="Kuo S."/>
            <person name="Philippsen P."/>
        </authorList>
    </citation>
    <scope>GENOME REANNOTATION</scope>
    <scope>SEQUENCE REVISION TO 301; 329 AND 332</scope>
    <source>
        <strain>ATCC 10895 / CBS 109.51 / FGSC 9923 / NRRL Y-1056</strain>
    </source>
</reference>
<organism>
    <name type="scientific">Eremothecium gossypii (strain ATCC 10895 / CBS 109.51 / FGSC 9923 / NRRL Y-1056)</name>
    <name type="common">Yeast</name>
    <name type="synonym">Ashbya gossypii</name>
    <dbReference type="NCBI Taxonomy" id="284811"/>
    <lineage>
        <taxon>Eukaryota</taxon>
        <taxon>Fungi</taxon>
        <taxon>Dikarya</taxon>
        <taxon>Ascomycota</taxon>
        <taxon>Saccharomycotina</taxon>
        <taxon>Saccharomycetes</taxon>
        <taxon>Saccharomycetales</taxon>
        <taxon>Saccharomycetaceae</taxon>
        <taxon>Eremothecium</taxon>
    </lineage>
</organism>
<keyword id="KW-0175">Coiled coil</keyword>
<keyword id="KW-0963">Cytoplasm</keyword>
<keyword id="KW-0931">ER-Golgi transport</keyword>
<keyword id="KW-0268">Exocytosis</keyword>
<keyword id="KW-0343">GTPase activation</keyword>
<keyword id="KW-0653">Protein transport</keyword>
<keyword id="KW-1185">Reference proteome</keyword>
<keyword id="KW-0813">Transport</keyword>
<dbReference type="EMBL" id="AE016819">
    <property type="protein sequence ID" value="AAS53213.2"/>
    <property type="molecule type" value="Genomic_DNA"/>
</dbReference>
<dbReference type="RefSeq" id="NP_985389.2">
    <property type="nucleotide sequence ID" value="NM_210743.2"/>
</dbReference>
<dbReference type="SMR" id="Q755I4"/>
<dbReference type="FunCoup" id="Q755I4">
    <property type="interactions" value="187"/>
</dbReference>
<dbReference type="STRING" id="284811.Q755I4"/>
<dbReference type="EnsemblFungi" id="AAS53213">
    <property type="protein sequence ID" value="AAS53213"/>
    <property type="gene ID" value="AGOS_AFL161C"/>
</dbReference>
<dbReference type="GeneID" id="4621615"/>
<dbReference type="KEGG" id="ago:AGOS_AFL161C"/>
<dbReference type="eggNOG" id="KOG1102">
    <property type="taxonomic scope" value="Eukaryota"/>
</dbReference>
<dbReference type="HOGENOM" id="CLU_005350_11_3_1"/>
<dbReference type="InParanoid" id="Q755I4"/>
<dbReference type="OMA" id="LFVHDAM"/>
<dbReference type="OrthoDB" id="295078at2759"/>
<dbReference type="Proteomes" id="UP000000591">
    <property type="component" value="Chromosome VI"/>
</dbReference>
<dbReference type="GO" id="GO:0005935">
    <property type="term" value="C:cellular bud neck"/>
    <property type="evidence" value="ECO:0007669"/>
    <property type="project" value="EnsemblFungi"/>
</dbReference>
<dbReference type="GO" id="GO:0005934">
    <property type="term" value="C:cellular bud tip"/>
    <property type="evidence" value="ECO:0007669"/>
    <property type="project" value="EnsemblFungi"/>
</dbReference>
<dbReference type="GO" id="GO:0005829">
    <property type="term" value="C:cytosol"/>
    <property type="evidence" value="ECO:0007669"/>
    <property type="project" value="EnsemblFungi"/>
</dbReference>
<dbReference type="GO" id="GO:0005798">
    <property type="term" value="C:Golgi-associated vesicle"/>
    <property type="evidence" value="ECO:0007669"/>
    <property type="project" value="EnsemblFungi"/>
</dbReference>
<dbReference type="GO" id="GO:0000131">
    <property type="term" value="C:incipient cellular bud site"/>
    <property type="evidence" value="ECO:0007669"/>
    <property type="project" value="EnsemblFungi"/>
</dbReference>
<dbReference type="GO" id="GO:0043332">
    <property type="term" value="C:mating projection tip"/>
    <property type="evidence" value="ECO:0007669"/>
    <property type="project" value="EnsemblFungi"/>
</dbReference>
<dbReference type="GO" id="GO:0005886">
    <property type="term" value="C:plasma membrane"/>
    <property type="evidence" value="ECO:0007669"/>
    <property type="project" value="EnsemblFungi"/>
</dbReference>
<dbReference type="GO" id="GO:0005096">
    <property type="term" value="F:GTPase activator activity"/>
    <property type="evidence" value="ECO:0000318"/>
    <property type="project" value="GO_Central"/>
</dbReference>
<dbReference type="GO" id="GO:0006888">
    <property type="term" value="P:endoplasmic reticulum to Golgi vesicle-mediated transport"/>
    <property type="evidence" value="ECO:0007669"/>
    <property type="project" value="EnsemblFungi"/>
</dbReference>
<dbReference type="GO" id="GO:0006887">
    <property type="term" value="P:exocytosis"/>
    <property type="evidence" value="ECO:0007669"/>
    <property type="project" value="UniProtKB-KW"/>
</dbReference>
<dbReference type="GO" id="GO:0015031">
    <property type="term" value="P:protein transport"/>
    <property type="evidence" value="ECO:0007669"/>
    <property type="project" value="UniProtKB-KW"/>
</dbReference>
<dbReference type="FunFam" id="1.10.10.750:FF:000003">
    <property type="entry name" value="GTPase activating protein (Evi5)"/>
    <property type="match status" value="1"/>
</dbReference>
<dbReference type="FunFam" id="1.10.472.80:FF:000044">
    <property type="entry name" value="GTPase-activating protein GYP5"/>
    <property type="match status" value="1"/>
</dbReference>
<dbReference type="Gene3D" id="1.10.8.270">
    <property type="entry name" value="putative rabgap domain of human tbc1 domain family member 14 like domains"/>
    <property type="match status" value="1"/>
</dbReference>
<dbReference type="Gene3D" id="1.10.10.750">
    <property type="entry name" value="Ypt/Rab-GAP domain of gyp1p, domain 1"/>
    <property type="match status" value="1"/>
</dbReference>
<dbReference type="Gene3D" id="1.10.472.80">
    <property type="entry name" value="Ypt/Rab-GAP domain of gyp1p, domain 3"/>
    <property type="match status" value="1"/>
</dbReference>
<dbReference type="InterPro" id="IPR000195">
    <property type="entry name" value="Rab-GAP-TBC_dom"/>
</dbReference>
<dbReference type="InterPro" id="IPR035969">
    <property type="entry name" value="Rab-GAP_TBC_sf"/>
</dbReference>
<dbReference type="InterPro" id="IPR050302">
    <property type="entry name" value="Rab_GAP_TBC_domain"/>
</dbReference>
<dbReference type="PANTHER" id="PTHR47219:SF9">
    <property type="entry name" value="GTPASE ACTIVATING PROTEIN AND CENTROSOME-ASSOCIATED, ISOFORM B"/>
    <property type="match status" value="1"/>
</dbReference>
<dbReference type="PANTHER" id="PTHR47219">
    <property type="entry name" value="RAB GTPASE-ACTIVATING PROTEIN 1-LIKE"/>
    <property type="match status" value="1"/>
</dbReference>
<dbReference type="Pfam" id="PF23436">
    <property type="entry name" value="RabGap-TBC_2"/>
    <property type="match status" value="1"/>
</dbReference>
<dbReference type="SMART" id="SM00164">
    <property type="entry name" value="TBC"/>
    <property type="match status" value="1"/>
</dbReference>
<dbReference type="SUPFAM" id="SSF47923">
    <property type="entry name" value="Ypt/Rab-GAP domain of gyp1p"/>
    <property type="match status" value="2"/>
</dbReference>
<dbReference type="PROSITE" id="PS50086">
    <property type="entry name" value="TBC_RABGAP"/>
    <property type="match status" value="1"/>
</dbReference>
<comment type="function">
    <text evidence="1">GTPase-activating protein which accelerates the GTP hydrolysis rate of several GTPases. Involved in ER to Golgi trafficking and polarized exocytosis (By similarity).</text>
</comment>
<comment type="subcellular location">
    <subcellularLocation>
        <location evidence="1">Cytoplasm</location>
    </subcellularLocation>
</comment>
<comment type="similarity">
    <text evidence="5">Belongs to the GYP5 family.</text>
</comment>
<proteinExistence type="inferred from homology"/>
<protein>
    <recommendedName>
        <fullName>GTPase-activating protein GYP5</fullName>
    </recommendedName>
</protein>
<gene>
    <name type="primary">GYP5</name>
    <name type="ordered locus">AFL161C</name>
</gene>
<feature type="chain" id="PRO_0000240364" description="GTPase-activating protein GYP5">
    <location>
        <begin position="1"/>
        <end position="829"/>
    </location>
</feature>
<feature type="domain" description="Rab-GAP TBC" evidence="3">
    <location>
        <begin position="371"/>
        <end position="550"/>
    </location>
</feature>
<feature type="region of interest" description="Disordered" evidence="4">
    <location>
        <begin position="1"/>
        <end position="243"/>
    </location>
</feature>
<feature type="region of interest" description="Disordered" evidence="4">
    <location>
        <begin position="600"/>
        <end position="620"/>
    </location>
</feature>
<feature type="region of interest" description="Disordered" evidence="4">
    <location>
        <begin position="790"/>
        <end position="812"/>
    </location>
</feature>
<feature type="coiled-coil region" evidence="2">
    <location>
        <begin position="279"/>
        <end position="341"/>
    </location>
</feature>
<feature type="coiled-coil region" evidence="2">
    <location>
        <begin position="666"/>
        <end position="803"/>
    </location>
</feature>
<feature type="compositionally biased region" description="Basic and acidic residues" evidence="4">
    <location>
        <begin position="38"/>
        <end position="50"/>
    </location>
</feature>
<feature type="compositionally biased region" description="Low complexity" evidence="4">
    <location>
        <begin position="101"/>
        <end position="115"/>
    </location>
</feature>
<feature type="compositionally biased region" description="Basic and acidic residues" evidence="4">
    <location>
        <begin position="142"/>
        <end position="151"/>
    </location>
</feature>
<feature type="compositionally biased region" description="Basic and acidic residues" evidence="4">
    <location>
        <begin position="189"/>
        <end position="220"/>
    </location>
</feature>
<feature type="compositionally biased region" description="Basic and acidic residues" evidence="4">
    <location>
        <begin position="800"/>
        <end position="811"/>
    </location>
</feature>
<name>GYP5_EREGS</name>
<accession>Q755I4</accession>
<evidence type="ECO:0000250" key="1"/>
<evidence type="ECO:0000255" key="2"/>
<evidence type="ECO:0000255" key="3">
    <source>
        <dbReference type="PROSITE-ProRule" id="PRU00163"/>
    </source>
</evidence>
<evidence type="ECO:0000256" key="4">
    <source>
        <dbReference type="SAM" id="MobiDB-lite"/>
    </source>
</evidence>
<evidence type="ECO:0000305" key="5"/>